<name>DABA_BACCN</name>
<keyword id="KW-1003">Cell membrane</keyword>
<keyword id="KW-0472">Membrane</keyword>
<keyword id="KW-0479">Metal-binding</keyword>
<keyword id="KW-0813">Transport</keyword>
<keyword id="KW-0862">Zinc</keyword>
<organism>
    <name type="scientific">Bacillus cytotoxicus (strain DSM 22905 / CIP 110041 / 391-98 / NVH 391-98)</name>
    <dbReference type="NCBI Taxonomy" id="315749"/>
    <lineage>
        <taxon>Bacteria</taxon>
        <taxon>Bacillati</taxon>
        <taxon>Bacillota</taxon>
        <taxon>Bacilli</taxon>
        <taxon>Bacillales</taxon>
        <taxon>Bacillaceae</taxon>
        <taxon>Bacillus</taxon>
        <taxon>Bacillus cereus group</taxon>
    </lineage>
</organism>
<evidence type="ECO:0000255" key="1">
    <source>
        <dbReference type="HAMAP-Rule" id="MF_01871"/>
    </source>
</evidence>
<protein>
    <recommendedName>
        <fullName evidence="1">Probable inorganic carbon transporter subunit DabA</fullName>
    </recommendedName>
</protein>
<proteinExistence type="inferred from homology"/>
<comment type="function">
    <text evidence="1">Part of an energy-coupled inorganic carbon pump.</text>
</comment>
<comment type="cofactor">
    <cofactor evidence="1">
        <name>Zn(2+)</name>
        <dbReference type="ChEBI" id="CHEBI:29105"/>
    </cofactor>
</comment>
<comment type="subunit">
    <text evidence="1">Forms a complex with DabB.</text>
</comment>
<comment type="subcellular location">
    <subcellularLocation>
        <location evidence="1">Cell membrane</location>
        <topology evidence="1">Peripheral membrane protein</topology>
    </subcellularLocation>
</comment>
<comment type="similarity">
    <text evidence="1">Belongs to the inorganic carbon transporter (TC 9.A.2) DabA family.</text>
</comment>
<feature type="chain" id="PRO_0000387246" description="Probable inorganic carbon transporter subunit DabA">
    <location>
        <begin position="1"/>
        <end position="874"/>
    </location>
</feature>
<feature type="binding site" evidence="1">
    <location>
        <position position="398"/>
    </location>
    <ligand>
        <name>Zn(2+)</name>
        <dbReference type="ChEBI" id="CHEBI:29105"/>
    </ligand>
</feature>
<feature type="binding site" evidence="1">
    <location>
        <position position="400"/>
    </location>
    <ligand>
        <name>Zn(2+)</name>
        <dbReference type="ChEBI" id="CHEBI:29105"/>
    </ligand>
</feature>
<feature type="binding site" evidence="1">
    <location>
        <position position="580"/>
    </location>
    <ligand>
        <name>Zn(2+)</name>
        <dbReference type="ChEBI" id="CHEBI:29105"/>
    </ligand>
</feature>
<feature type="binding site" evidence="1">
    <location>
        <position position="595"/>
    </location>
    <ligand>
        <name>Zn(2+)</name>
        <dbReference type="ChEBI" id="CHEBI:29105"/>
    </ligand>
</feature>
<reference key="1">
    <citation type="journal article" date="2008" name="Chem. Biol. Interact.">
        <title>Extending the Bacillus cereus group genomics to putative food-borne pathogens of different toxicity.</title>
        <authorList>
            <person name="Lapidus A."/>
            <person name="Goltsman E."/>
            <person name="Auger S."/>
            <person name="Galleron N."/>
            <person name="Segurens B."/>
            <person name="Dossat C."/>
            <person name="Land M.L."/>
            <person name="Broussolle V."/>
            <person name="Brillard J."/>
            <person name="Guinebretiere M.-H."/>
            <person name="Sanchis V."/>
            <person name="Nguen-the C."/>
            <person name="Lereclus D."/>
            <person name="Richardson P."/>
            <person name="Wincker P."/>
            <person name="Weissenbach J."/>
            <person name="Ehrlich S.D."/>
            <person name="Sorokin A."/>
        </authorList>
    </citation>
    <scope>NUCLEOTIDE SEQUENCE [LARGE SCALE GENOMIC DNA]</scope>
    <source>
        <strain>DSM 22905 / CIP 110041 / 391-98 / NVH 391-98</strain>
    </source>
</reference>
<sequence>MSVSSVVTKESFKKKDVNMNIQEKDINDFVQSASRVIAPLWPISTFAARHPWVGLEKQSFEQVADWLKEIRDVDIYPSASMIHSAKRRGEIDESFLYAGLHRWLDSQSFHIPREKVERYCQAALKLDKLPSHLLLSKELNTLAAEINNVNTESTEDFSMQPISSLIENQDSERLANILDYHVIKWCKLYLDNFQSSWAMPNREKGFYHAWHHLIKYDPALSKQQRKALKDWPQDANAALVRALSELKIPKSKIQTYLEGHLLSLPGWAGIILWRSKQSIREHALLTEYLAVRISMEWAIVNPYLSLVNHRLKKKVSIVPLLASWIHWGDLSIEEWSQMSATEQNELLSIAHHFDEKLRRKLWWEAWEQTHAERLSQEILSKQCVNNKKKFVLAQMAFCIDVRSEPFRRQLEKAGPFETIGIAGFFGLPIATSELGSHHSHPSLPVMQKPKHRIKELASEDELKSYQQRKKVDHSLSYTFKMMKQNVLTSLLLPELSGPFLGLQMIARSFVPRRLGSFIRNLRKTWLRKPDTRFSLDYAHDTESEIPIGFSKEEKVNYVRQTLKMMGLTENFAPLVVICGHSSQSTNNPYAAALECGACGGAAGGFNARIFATLCNLPEVREGLSAEGIKIPEDTVFAAAEHKTTVDELEWIYIPELSESAREALNHIEAIMPKVSHNANRERLAQLPNFKTKMKNPRAEAHRFAEDWSEIRPEWGLARNASFIIGQRELTQDCDLEGRAFLHNYDWKQDESGDILASIIAGPGTVAQWINLQYYASTVAPHYYGSGNKATQTVTAGLGVMQGNASDLLSGVPWQSVMQSDDEAYHSPLRLLIVIQAPSQYIERLLNNDFIFREKVQNGWVRLASVDPEVGWKNW</sequence>
<accession>A7GMS5</accession>
<dbReference type="EMBL" id="CP000764">
    <property type="protein sequence ID" value="ABS21433.1"/>
    <property type="molecule type" value="Genomic_DNA"/>
</dbReference>
<dbReference type="RefSeq" id="WP_011984186.1">
    <property type="nucleotide sequence ID" value="NC_009674.1"/>
</dbReference>
<dbReference type="SMR" id="A7GMS5"/>
<dbReference type="STRING" id="315749.Bcer98_1107"/>
<dbReference type="GeneID" id="33896462"/>
<dbReference type="KEGG" id="bcy:Bcer98_1107"/>
<dbReference type="eggNOG" id="COG3002">
    <property type="taxonomic scope" value="Bacteria"/>
</dbReference>
<dbReference type="HOGENOM" id="CLU_009885_0_0_9"/>
<dbReference type="OrthoDB" id="9805101at2"/>
<dbReference type="Proteomes" id="UP000002300">
    <property type="component" value="Chromosome"/>
</dbReference>
<dbReference type="GO" id="GO:0005886">
    <property type="term" value="C:plasma membrane"/>
    <property type="evidence" value="ECO:0007669"/>
    <property type="project" value="UniProtKB-SubCell"/>
</dbReference>
<dbReference type="GO" id="GO:0008270">
    <property type="term" value="F:zinc ion binding"/>
    <property type="evidence" value="ECO:0007669"/>
    <property type="project" value="UniProtKB-UniRule"/>
</dbReference>
<dbReference type="HAMAP" id="MF_01871">
    <property type="entry name" value="DabA"/>
    <property type="match status" value="1"/>
</dbReference>
<dbReference type="InterPro" id="IPR018752">
    <property type="entry name" value="DabA"/>
</dbReference>
<dbReference type="PANTHER" id="PTHR38344:SF1">
    <property type="entry name" value="INORGANIC CARBON TRANSPORTER SUBUNIT DABA-RELATED"/>
    <property type="match status" value="1"/>
</dbReference>
<dbReference type="PANTHER" id="PTHR38344">
    <property type="entry name" value="UPF0753 PROTEIN AQ_863"/>
    <property type="match status" value="1"/>
</dbReference>
<dbReference type="Pfam" id="PF10070">
    <property type="entry name" value="DabA"/>
    <property type="match status" value="1"/>
</dbReference>
<gene>
    <name evidence="1" type="primary">dabA</name>
    <name type="ordered locus">Bcer98_1107</name>
</gene>